<comment type="function">
    <text evidence="1">G-protein coupled receptor for CRH (corticotropin-releasing factor), UCN (urocortin), UCN2 and UCN3. Has high affinity for UCN. Ligand binding causes a conformation change that triggers signaling via guanine nucleotide-binding proteins (G proteins) and down-stream effectors, such as adenylate cyclase. Promotes the activation of adenylate cyclase, leading to increased intracellular cAMP levels (By similarity).</text>
</comment>
<comment type="subcellular location">
    <subcellularLocation>
        <location>Cell membrane</location>
        <topology>Multi-pass membrane protein</topology>
    </subcellularLocation>
</comment>
<comment type="domain">
    <text evidence="1">The transmembrane domain is composed of seven transmembrane helices that are arranged in V-shape. Transmembrane helix 7 assumes a sharply kinked structure (By similarity).</text>
</comment>
<comment type="domain">
    <text evidence="1">The uncleaved pseudo signal peptide prevents receptor's oligomerization and coupling to G(i) subunits. It is also responsible for the rather low receptor localization at the plasma membrane (By similarity).</text>
</comment>
<comment type="PTM">
    <text evidence="1">A N-glycosylation site within the signal peptide impedes its proper cleavage and function.</text>
</comment>
<comment type="similarity">
    <text evidence="3">Belongs to the G-protein coupled receptor 2 family.</text>
</comment>
<gene>
    <name type="primary">crhr2</name>
    <name type="synonym">crf2</name>
</gene>
<reference key="1">
    <citation type="journal article" date="1997" name="J. Neurochem.">
        <title>Identification of two corticotropin-releasing factor receptors from Xenopus laevis with high ligand selectivity: unusual pharmacology of the type 1 receptor.</title>
        <authorList>
            <person name="Dautzenberg F.M."/>
            <person name="Dietrich K."/>
            <person name="Palchaudhuri M.R."/>
            <person name="Spiess J."/>
        </authorList>
    </citation>
    <scope>NUCLEOTIDE SEQUENCE [MRNA]</scope>
    <source>
        <tissue>Brain</tissue>
        <tissue>Heart</tissue>
    </source>
</reference>
<name>CRFR2_XENLA</name>
<accession>O42603</accession>
<dbReference type="EMBL" id="Y14037">
    <property type="protein sequence ID" value="CAA74364.1"/>
    <property type="molecule type" value="mRNA"/>
</dbReference>
<dbReference type="RefSeq" id="NP_001079300.1">
    <property type="nucleotide sequence ID" value="NM_001085831.1"/>
</dbReference>
<dbReference type="SMR" id="O42603"/>
<dbReference type="GlyCosmos" id="O42603">
    <property type="glycosylation" value="4 sites, No reported glycans"/>
</dbReference>
<dbReference type="GeneID" id="378608"/>
<dbReference type="KEGG" id="xla:378608"/>
<dbReference type="AGR" id="Xenbase:XB-GENE-990954"/>
<dbReference type="CTD" id="378608"/>
<dbReference type="Xenbase" id="XB-GENE-990954">
    <property type="gene designation" value="crhr2.S"/>
</dbReference>
<dbReference type="OrthoDB" id="6022368at2759"/>
<dbReference type="Proteomes" id="UP000186698">
    <property type="component" value="Chromosome 6S"/>
</dbReference>
<dbReference type="Bgee" id="378608">
    <property type="expression patterns" value="Expressed in brain and 6 other cell types or tissues"/>
</dbReference>
<dbReference type="GO" id="GO:0043679">
    <property type="term" value="C:axon terminus"/>
    <property type="evidence" value="ECO:0000318"/>
    <property type="project" value="GO_Central"/>
</dbReference>
<dbReference type="GO" id="GO:0030425">
    <property type="term" value="C:dendrite"/>
    <property type="evidence" value="ECO:0000318"/>
    <property type="project" value="GO_Central"/>
</dbReference>
<dbReference type="GO" id="GO:0005886">
    <property type="term" value="C:plasma membrane"/>
    <property type="evidence" value="ECO:0000318"/>
    <property type="project" value="GO_Central"/>
</dbReference>
<dbReference type="GO" id="GO:0015056">
    <property type="term" value="F:corticotrophin-releasing factor receptor activity"/>
    <property type="evidence" value="ECO:0000318"/>
    <property type="project" value="GO_Central"/>
</dbReference>
<dbReference type="GO" id="GO:0043404">
    <property type="term" value="F:corticotropin-releasing hormone receptor activity"/>
    <property type="evidence" value="ECO:0000318"/>
    <property type="project" value="GO_Central"/>
</dbReference>
<dbReference type="GO" id="GO:0008528">
    <property type="term" value="F:G protein-coupled peptide receptor activity"/>
    <property type="evidence" value="ECO:0000318"/>
    <property type="project" value="GO_Central"/>
</dbReference>
<dbReference type="GO" id="GO:0017046">
    <property type="term" value="F:peptide hormone binding"/>
    <property type="evidence" value="ECO:0000318"/>
    <property type="project" value="GO_Central"/>
</dbReference>
<dbReference type="GO" id="GO:0007188">
    <property type="term" value="P:adenylate cyclase-modulating G protein-coupled receptor signaling pathway"/>
    <property type="evidence" value="ECO:0000318"/>
    <property type="project" value="GO_Central"/>
</dbReference>
<dbReference type="GO" id="GO:0007166">
    <property type="term" value="P:cell surface receptor signaling pathway"/>
    <property type="evidence" value="ECO:0007669"/>
    <property type="project" value="InterPro"/>
</dbReference>
<dbReference type="GO" id="GO:0060291">
    <property type="term" value="P:long-term synaptic potentiation"/>
    <property type="evidence" value="ECO:0000318"/>
    <property type="project" value="GO_Central"/>
</dbReference>
<dbReference type="CDD" id="cd15446">
    <property type="entry name" value="7tmB1_CRF-R2"/>
    <property type="match status" value="1"/>
</dbReference>
<dbReference type="FunFam" id="1.20.1070.10:FF:000021">
    <property type="entry name" value="Corticotropin releasing factor receptor 2"/>
    <property type="match status" value="1"/>
</dbReference>
<dbReference type="Gene3D" id="4.10.1240.10">
    <property type="entry name" value="GPCR, family 2, extracellular hormone receptor domain"/>
    <property type="match status" value="1"/>
</dbReference>
<dbReference type="Gene3D" id="1.20.1070.10">
    <property type="entry name" value="Rhodopsin 7-helix transmembrane proteins"/>
    <property type="match status" value="1"/>
</dbReference>
<dbReference type="InterPro" id="IPR050332">
    <property type="entry name" value="GPCR_2"/>
</dbReference>
<dbReference type="InterPro" id="IPR017981">
    <property type="entry name" value="GPCR_2-like_7TM"/>
</dbReference>
<dbReference type="InterPro" id="IPR003053">
    <property type="entry name" value="GPCR_2_CRF2_rcpt"/>
</dbReference>
<dbReference type="InterPro" id="IPR003051">
    <property type="entry name" value="GPCR_2_CRF_rcpt"/>
</dbReference>
<dbReference type="InterPro" id="IPR036445">
    <property type="entry name" value="GPCR_2_extracell_dom_sf"/>
</dbReference>
<dbReference type="InterPro" id="IPR001879">
    <property type="entry name" value="GPCR_2_extracellular_dom"/>
</dbReference>
<dbReference type="InterPro" id="IPR000832">
    <property type="entry name" value="GPCR_2_secretin-like"/>
</dbReference>
<dbReference type="InterPro" id="IPR017983">
    <property type="entry name" value="GPCR_2_secretin-like_CS"/>
</dbReference>
<dbReference type="PANTHER" id="PTHR45620:SF19">
    <property type="entry name" value="CORTICOTROPIN-RELEASING FACTOR RECEPTOR 2"/>
    <property type="match status" value="1"/>
</dbReference>
<dbReference type="PANTHER" id="PTHR45620">
    <property type="entry name" value="PDF RECEPTOR-LIKE PROTEIN-RELATED"/>
    <property type="match status" value="1"/>
</dbReference>
<dbReference type="Pfam" id="PF00002">
    <property type="entry name" value="7tm_2"/>
    <property type="match status" value="1"/>
</dbReference>
<dbReference type="Pfam" id="PF02793">
    <property type="entry name" value="HRM"/>
    <property type="match status" value="1"/>
</dbReference>
<dbReference type="PRINTS" id="PR01279">
    <property type="entry name" value="CRFRECEPTOR"/>
</dbReference>
<dbReference type="PRINTS" id="PR01281">
    <property type="entry name" value="CRFRECEPTOR2"/>
</dbReference>
<dbReference type="PRINTS" id="PR00249">
    <property type="entry name" value="GPCRSECRETIN"/>
</dbReference>
<dbReference type="SMART" id="SM00008">
    <property type="entry name" value="HormR"/>
    <property type="match status" value="1"/>
</dbReference>
<dbReference type="SUPFAM" id="SSF81321">
    <property type="entry name" value="Family A G protein-coupled receptor-like"/>
    <property type="match status" value="1"/>
</dbReference>
<dbReference type="SUPFAM" id="SSF111418">
    <property type="entry name" value="Hormone receptor domain"/>
    <property type="match status" value="1"/>
</dbReference>
<dbReference type="PROSITE" id="PS00649">
    <property type="entry name" value="G_PROTEIN_RECEP_F2_1"/>
    <property type="match status" value="1"/>
</dbReference>
<dbReference type="PROSITE" id="PS00650">
    <property type="entry name" value="G_PROTEIN_RECEP_F2_2"/>
    <property type="match status" value="1"/>
</dbReference>
<dbReference type="PROSITE" id="PS50227">
    <property type="entry name" value="G_PROTEIN_RECEP_F2_3"/>
    <property type="match status" value="1"/>
</dbReference>
<dbReference type="PROSITE" id="PS50261">
    <property type="entry name" value="G_PROTEIN_RECEP_F2_4"/>
    <property type="match status" value="1"/>
</dbReference>
<feature type="chain" id="PRO_0000012823" description="Corticotropin-releasing factor receptor 2">
    <location>
        <begin position="1"/>
        <end position="413"/>
    </location>
</feature>
<feature type="signal peptide" description="Not cleaved" evidence="1">
    <location>
        <begin position="1"/>
        <end position="22"/>
    </location>
</feature>
<feature type="topological domain" description="Extracellular" evidence="1">
    <location>
        <begin position="1"/>
        <end position="110"/>
    </location>
</feature>
<feature type="transmembrane region" description="Helical; Name=1" evidence="1">
    <location>
        <begin position="111"/>
        <end position="141"/>
    </location>
</feature>
<feature type="topological domain" description="Cytoplasmic" evidence="1">
    <location>
        <begin position="142"/>
        <end position="148"/>
    </location>
</feature>
<feature type="transmembrane region" description="Helical; Name=2" evidence="1">
    <location>
        <begin position="149"/>
        <end position="173"/>
    </location>
</feature>
<feature type="topological domain" description="Extracellular" evidence="1">
    <location>
        <begin position="174"/>
        <end position="187"/>
    </location>
</feature>
<feature type="transmembrane region" description="Helical; Name=3" evidence="1">
    <location>
        <begin position="188"/>
        <end position="216"/>
    </location>
</feature>
<feature type="topological domain" description="Cytoplasmic" evidence="1">
    <location>
        <begin position="217"/>
        <end position="223"/>
    </location>
</feature>
<feature type="transmembrane region" description="Helical; Name=4" evidence="1">
    <location>
        <begin position="224"/>
        <end position="251"/>
    </location>
</feature>
<feature type="topological domain" description="Extracellular" evidence="1">
    <location>
        <begin position="252"/>
        <end position="267"/>
    </location>
</feature>
<feature type="transmembrane region" description="Helical; Name=5" evidence="1">
    <location>
        <begin position="268"/>
        <end position="293"/>
    </location>
</feature>
<feature type="topological domain" description="Cytoplasmic" evidence="1">
    <location>
        <begin position="294"/>
        <end position="304"/>
    </location>
</feature>
<feature type="transmembrane region" description="Helical; Name=6" evidence="1">
    <location>
        <begin position="305"/>
        <end position="329"/>
    </location>
</feature>
<feature type="topological domain" description="Extracellular" evidence="1">
    <location>
        <begin position="330"/>
        <end position="336"/>
    </location>
</feature>
<feature type="transmembrane region" description="Helical; Name=7" evidence="1">
    <location>
        <begin position="337"/>
        <end position="366"/>
    </location>
</feature>
<feature type="topological domain" description="Cytoplasmic" evidence="1">
    <location>
        <begin position="367"/>
        <end position="413"/>
    </location>
</feature>
<feature type="glycosylation site" description="N-linked (GlcNAc...) asparagine" evidence="3">
    <location>
        <position position="16"/>
    </location>
</feature>
<feature type="glycosylation site" description="N-linked (GlcNAc...) asparagine" evidence="2">
    <location>
        <position position="77"/>
    </location>
</feature>
<feature type="glycosylation site" description="N-linked (GlcNAc...) asparagine" evidence="2">
    <location>
        <position position="89"/>
    </location>
</feature>
<feature type="glycosylation site" description="N-linked (GlcNAc...) asparagine" evidence="2">
    <location>
        <position position="97"/>
    </location>
</feature>
<feature type="disulfide bond" evidence="1">
    <location>
        <begin position="17"/>
        <end position="53"/>
    </location>
</feature>
<feature type="disulfide bond" evidence="1">
    <location>
        <begin position="43"/>
        <end position="86"/>
    </location>
</feature>
<feature type="disulfide bond" evidence="1">
    <location>
        <begin position="67"/>
        <end position="101"/>
    </location>
</feature>
<feature type="disulfide bond" evidence="1">
    <location>
        <begin position="186"/>
        <end position="256"/>
    </location>
</feature>
<protein>
    <recommendedName>
        <fullName>Corticotropin-releasing factor receptor 2</fullName>
        <shortName>CRF-R-2</shortName>
        <shortName>CRF-R2</shortName>
        <shortName>CRFR-2</shortName>
    </recommendedName>
    <alternativeName>
        <fullName>Corticotropin-releasing hormone receptor 2</fullName>
        <shortName>CRH-R-2</shortName>
        <shortName>CRH-R2</shortName>
    </alternativeName>
</protein>
<evidence type="ECO:0000250" key="1"/>
<evidence type="ECO:0000255" key="2"/>
<evidence type="ECO:0000305" key="3"/>
<sequence>MDSTIFEIIIDEFDANCSLLDAFQDSFLHSESSSFFGFEGPYCSATIDQIGTCWPRSLAGELVERPCPDSFNGIRYNTTRNVYRECFENGTWASWMNYSQCVPILDNKRKYALHYKIALIINYLGHCISILALVIAFLLFLCLRSIRCLRNIIHWNLITTFILRNIMWFLLQMIDHNIHESNEVWCRCITTIYNYFVVTNFFWMFVEGCYLHTAIVMTYSTDKLRKWVFLFIGWCIPSPIIVTWAICKLFYENEQCWIGKEPGKYIDYIYQGRVILVLLINFVFLFNIVRILMTKLRASTTSETIQYRKAVKATLVLLPLLGITYMLFFVNPGEDDVSQIVFIYFNSFLQSFQGFFVSVFYCFLNGEVRSAARKRWHRWQDHHSLRVRVARAMSIPTSPTRISFHSIKQTAAV</sequence>
<organism>
    <name type="scientific">Xenopus laevis</name>
    <name type="common">African clawed frog</name>
    <dbReference type="NCBI Taxonomy" id="8355"/>
    <lineage>
        <taxon>Eukaryota</taxon>
        <taxon>Metazoa</taxon>
        <taxon>Chordata</taxon>
        <taxon>Craniata</taxon>
        <taxon>Vertebrata</taxon>
        <taxon>Euteleostomi</taxon>
        <taxon>Amphibia</taxon>
        <taxon>Batrachia</taxon>
        <taxon>Anura</taxon>
        <taxon>Pipoidea</taxon>
        <taxon>Pipidae</taxon>
        <taxon>Xenopodinae</taxon>
        <taxon>Xenopus</taxon>
        <taxon>Xenopus</taxon>
    </lineage>
</organism>
<proteinExistence type="evidence at transcript level"/>
<keyword id="KW-1003">Cell membrane</keyword>
<keyword id="KW-1015">Disulfide bond</keyword>
<keyword id="KW-0297">G-protein coupled receptor</keyword>
<keyword id="KW-0325">Glycoprotein</keyword>
<keyword id="KW-0472">Membrane</keyword>
<keyword id="KW-0675">Receptor</keyword>
<keyword id="KW-1185">Reference proteome</keyword>
<keyword id="KW-0732">Signal</keyword>
<keyword id="KW-0807">Transducer</keyword>
<keyword id="KW-0812">Transmembrane</keyword>
<keyword id="KW-1133">Transmembrane helix</keyword>